<comment type="function">
    <text evidence="1">Catalyzes the attachment of tryptophan to tRNA(Trp).</text>
</comment>
<comment type="catalytic activity">
    <reaction evidence="1">
        <text>tRNA(Trp) + L-tryptophan + ATP = L-tryptophyl-tRNA(Trp) + AMP + diphosphate + H(+)</text>
        <dbReference type="Rhea" id="RHEA:24080"/>
        <dbReference type="Rhea" id="RHEA-COMP:9671"/>
        <dbReference type="Rhea" id="RHEA-COMP:9705"/>
        <dbReference type="ChEBI" id="CHEBI:15378"/>
        <dbReference type="ChEBI" id="CHEBI:30616"/>
        <dbReference type="ChEBI" id="CHEBI:33019"/>
        <dbReference type="ChEBI" id="CHEBI:57912"/>
        <dbReference type="ChEBI" id="CHEBI:78442"/>
        <dbReference type="ChEBI" id="CHEBI:78535"/>
        <dbReference type="ChEBI" id="CHEBI:456215"/>
        <dbReference type="EC" id="6.1.1.2"/>
    </reaction>
</comment>
<comment type="subunit">
    <text evidence="1">Homodimer.</text>
</comment>
<comment type="subcellular location">
    <subcellularLocation>
        <location evidence="1">Cytoplasm</location>
    </subcellularLocation>
</comment>
<comment type="similarity">
    <text evidence="1">Belongs to the class-I aminoacyl-tRNA synthetase family.</text>
</comment>
<feature type="chain" id="PRO_0000136603" description="Tryptophan--tRNA ligase">
    <location>
        <begin position="1"/>
        <end position="451"/>
    </location>
</feature>
<feature type="short sequence motif" description="'HIGH' region" evidence="1">
    <location>
        <begin position="11"/>
        <end position="19"/>
    </location>
</feature>
<feature type="short sequence motif" description="'KMSKS' region" evidence="1">
    <location>
        <begin position="202"/>
        <end position="206"/>
    </location>
</feature>
<feature type="binding site" evidence="1">
    <location>
        <begin position="10"/>
        <end position="12"/>
    </location>
    <ligand>
        <name>ATP</name>
        <dbReference type="ChEBI" id="CHEBI:30616"/>
    </ligand>
</feature>
<feature type="binding site" evidence="1">
    <location>
        <begin position="18"/>
        <end position="19"/>
    </location>
    <ligand>
        <name>ATP</name>
        <dbReference type="ChEBI" id="CHEBI:30616"/>
    </ligand>
</feature>
<feature type="binding site" evidence="1">
    <location>
        <position position="143"/>
    </location>
    <ligand>
        <name>L-tryptophan</name>
        <dbReference type="ChEBI" id="CHEBI:57912"/>
    </ligand>
</feature>
<feature type="binding site" evidence="1">
    <location>
        <begin position="155"/>
        <end position="157"/>
    </location>
    <ligand>
        <name>ATP</name>
        <dbReference type="ChEBI" id="CHEBI:30616"/>
    </ligand>
</feature>
<feature type="binding site" evidence="1">
    <location>
        <position position="195"/>
    </location>
    <ligand>
        <name>ATP</name>
        <dbReference type="ChEBI" id="CHEBI:30616"/>
    </ligand>
</feature>
<feature type="binding site" evidence="1">
    <location>
        <begin position="202"/>
        <end position="206"/>
    </location>
    <ligand>
        <name>ATP</name>
        <dbReference type="ChEBI" id="CHEBI:30616"/>
    </ligand>
</feature>
<reference key="1">
    <citation type="journal article" date="2003" name="Nat. Genet.">
        <title>Comparative analysis of the genome sequences of Bordetella pertussis, Bordetella parapertussis and Bordetella bronchiseptica.</title>
        <authorList>
            <person name="Parkhill J."/>
            <person name="Sebaihia M."/>
            <person name="Preston A."/>
            <person name="Murphy L.D."/>
            <person name="Thomson N.R."/>
            <person name="Harris D.E."/>
            <person name="Holden M.T.G."/>
            <person name="Churcher C.M."/>
            <person name="Bentley S.D."/>
            <person name="Mungall K.L."/>
            <person name="Cerdeno-Tarraga A.-M."/>
            <person name="Temple L."/>
            <person name="James K.D."/>
            <person name="Harris B."/>
            <person name="Quail M.A."/>
            <person name="Achtman M."/>
            <person name="Atkin R."/>
            <person name="Baker S."/>
            <person name="Basham D."/>
            <person name="Bason N."/>
            <person name="Cherevach I."/>
            <person name="Chillingworth T."/>
            <person name="Collins M."/>
            <person name="Cronin A."/>
            <person name="Davis P."/>
            <person name="Doggett J."/>
            <person name="Feltwell T."/>
            <person name="Goble A."/>
            <person name="Hamlin N."/>
            <person name="Hauser H."/>
            <person name="Holroyd S."/>
            <person name="Jagels K."/>
            <person name="Leather S."/>
            <person name="Moule S."/>
            <person name="Norberczak H."/>
            <person name="O'Neil S."/>
            <person name="Ormond D."/>
            <person name="Price C."/>
            <person name="Rabbinowitsch E."/>
            <person name="Rutter S."/>
            <person name="Sanders M."/>
            <person name="Saunders D."/>
            <person name="Seeger K."/>
            <person name="Sharp S."/>
            <person name="Simmonds M."/>
            <person name="Skelton J."/>
            <person name="Squares R."/>
            <person name="Squares S."/>
            <person name="Stevens K."/>
            <person name="Unwin L."/>
            <person name="Whitehead S."/>
            <person name="Barrell B.G."/>
            <person name="Maskell D.J."/>
        </authorList>
    </citation>
    <scope>NUCLEOTIDE SEQUENCE [LARGE SCALE GENOMIC DNA]</scope>
    <source>
        <strain>ATCC BAA-588 / NCTC 13252 / RB50</strain>
    </source>
</reference>
<proteinExistence type="inferred from homology"/>
<name>SYW_BORBR</name>
<evidence type="ECO:0000255" key="1">
    <source>
        <dbReference type="HAMAP-Rule" id="MF_00140"/>
    </source>
</evidence>
<organism>
    <name type="scientific">Bordetella bronchiseptica (strain ATCC BAA-588 / NCTC 13252 / RB50)</name>
    <name type="common">Alcaligenes bronchisepticus</name>
    <dbReference type="NCBI Taxonomy" id="257310"/>
    <lineage>
        <taxon>Bacteria</taxon>
        <taxon>Pseudomonadati</taxon>
        <taxon>Pseudomonadota</taxon>
        <taxon>Betaproteobacteria</taxon>
        <taxon>Burkholderiales</taxon>
        <taxon>Alcaligenaceae</taxon>
        <taxon>Bordetella</taxon>
    </lineage>
</organism>
<dbReference type="EC" id="6.1.1.2" evidence="1"/>
<dbReference type="EMBL" id="BX640447">
    <property type="protein sequence ID" value="CAE34096.1"/>
    <property type="molecule type" value="Genomic_DNA"/>
</dbReference>
<dbReference type="RefSeq" id="WP_010926868.1">
    <property type="nucleotide sequence ID" value="NC_002927.3"/>
</dbReference>
<dbReference type="SMR" id="Q7WGI7"/>
<dbReference type="KEGG" id="bbr:BB3602"/>
<dbReference type="eggNOG" id="COG0180">
    <property type="taxonomic scope" value="Bacteria"/>
</dbReference>
<dbReference type="HOGENOM" id="CLU_029244_5_1_4"/>
<dbReference type="Proteomes" id="UP000001027">
    <property type="component" value="Chromosome"/>
</dbReference>
<dbReference type="GO" id="GO:0005829">
    <property type="term" value="C:cytosol"/>
    <property type="evidence" value="ECO:0007669"/>
    <property type="project" value="TreeGrafter"/>
</dbReference>
<dbReference type="GO" id="GO:0005524">
    <property type="term" value="F:ATP binding"/>
    <property type="evidence" value="ECO:0007669"/>
    <property type="project" value="UniProtKB-UniRule"/>
</dbReference>
<dbReference type="GO" id="GO:0004830">
    <property type="term" value="F:tryptophan-tRNA ligase activity"/>
    <property type="evidence" value="ECO:0007669"/>
    <property type="project" value="UniProtKB-UniRule"/>
</dbReference>
<dbReference type="GO" id="GO:0006436">
    <property type="term" value="P:tryptophanyl-tRNA aminoacylation"/>
    <property type="evidence" value="ECO:0007669"/>
    <property type="project" value="UniProtKB-UniRule"/>
</dbReference>
<dbReference type="CDD" id="cd00806">
    <property type="entry name" value="TrpRS_core"/>
    <property type="match status" value="1"/>
</dbReference>
<dbReference type="FunFam" id="1.10.240.10:FF:000005">
    <property type="entry name" value="Tryptophan--tRNA ligase"/>
    <property type="match status" value="1"/>
</dbReference>
<dbReference type="FunFam" id="3.40.50.620:FF:000144">
    <property type="entry name" value="Tryptophan--tRNA ligase"/>
    <property type="match status" value="1"/>
</dbReference>
<dbReference type="Gene3D" id="2.30.29.80">
    <property type="match status" value="1"/>
</dbReference>
<dbReference type="Gene3D" id="3.40.50.620">
    <property type="entry name" value="HUPs"/>
    <property type="match status" value="1"/>
</dbReference>
<dbReference type="Gene3D" id="1.10.240.10">
    <property type="entry name" value="Tyrosyl-Transfer RNA Synthetase"/>
    <property type="match status" value="1"/>
</dbReference>
<dbReference type="HAMAP" id="MF_00140_B">
    <property type="entry name" value="Trp_tRNA_synth_B"/>
    <property type="match status" value="1"/>
</dbReference>
<dbReference type="InterPro" id="IPR002305">
    <property type="entry name" value="aa-tRNA-synth_Ic"/>
</dbReference>
<dbReference type="InterPro" id="IPR014729">
    <property type="entry name" value="Rossmann-like_a/b/a_fold"/>
</dbReference>
<dbReference type="InterPro" id="IPR002306">
    <property type="entry name" value="Trp-tRNA-ligase"/>
</dbReference>
<dbReference type="InterPro" id="IPR024109">
    <property type="entry name" value="Trp-tRNA-ligase_bac-type"/>
</dbReference>
<dbReference type="InterPro" id="IPR050203">
    <property type="entry name" value="Trp-tRNA_synthetase"/>
</dbReference>
<dbReference type="InterPro" id="IPR036913">
    <property type="entry name" value="YegP-like_sf"/>
</dbReference>
<dbReference type="NCBIfam" id="NF008923">
    <property type="entry name" value="PRK12284.1"/>
    <property type="match status" value="1"/>
</dbReference>
<dbReference type="NCBIfam" id="TIGR00233">
    <property type="entry name" value="trpS"/>
    <property type="match status" value="1"/>
</dbReference>
<dbReference type="PANTHER" id="PTHR43766">
    <property type="entry name" value="TRYPTOPHAN--TRNA LIGASE, MITOCHONDRIAL"/>
    <property type="match status" value="1"/>
</dbReference>
<dbReference type="PANTHER" id="PTHR43766:SF1">
    <property type="entry name" value="TRYPTOPHAN--TRNA LIGASE, MITOCHONDRIAL"/>
    <property type="match status" value="1"/>
</dbReference>
<dbReference type="Pfam" id="PF00579">
    <property type="entry name" value="tRNA-synt_1b"/>
    <property type="match status" value="1"/>
</dbReference>
<dbReference type="PRINTS" id="PR01039">
    <property type="entry name" value="TRNASYNTHTRP"/>
</dbReference>
<dbReference type="SUPFAM" id="SSF52374">
    <property type="entry name" value="Nucleotidylyl transferase"/>
    <property type="match status" value="1"/>
</dbReference>
<dbReference type="SUPFAM" id="SSF160113">
    <property type="entry name" value="YegP-like"/>
    <property type="match status" value="1"/>
</dbReference>
<protein>
    <recommendedName>
        <fullName evidence="1">Tryptophan--tRNA ligase</fullName>
        <ecNumber evidence="1">6.1.1.2</ecNumber>
    </recommendedName>
    <alternativeName>
        <fullName evidence="1">Tryptophanyl-tRNA synthetase</fullName>
        <shortName evidence="1">TrpRS</shortName>
    </alternativeName>
</protein>
<gene>
    <name evidence="1" type="primary">trpS</name>
    <name type="ordered locus">BB3602</name>
</gene>
<sequence length="451" mass="49298">MNTRVLTGITTTGTPHLGNYAGAIRPAIQASTQPGVDAFFFLADYHALIKCDDPARVARSRLELAATWLAAGLDPERVTFYRQSDIPEITELCWLLTCVTPKGLMNRAHAYKASVDQNAAKGVEPDDGVTMGLFSYPVLMAADILLFNANQVPVGRDQVQHLEMARDIAQRFNHLYGREFFVLPEVVIAEEVATLPGLDGRKMSKSYNNTIPLFEGGAAGLRNATQRIVTDSRLPGEPKDAEASHLYMLYRAFSTQQESMAFRRQLEEGMGWGDAKQALYERLERDLAPMRERYVELISNPGLIEDILQAGAAKARKLAQPLVRTLRDAVGLGALQPAAAKAAQPARKAAKDARFVSFRDEDGSFRFRLLAADGEELLCSVPFANPKEAGALMRRLQDEAPEQALRGHDDVSYAAWLDGKEVAYGPQAADAGARDALLAKAREALAQLAAA</sequence>
<accession>Q7WGI7</accession>
<keyword id="KW-0030">Aminoacyl-tRNA synthetase</keyword>
<keyword id="KW-0067">ATP-binding</keyword>
<keyword id="KW-0963">Cytoplasm</keyword>
<keyword id="KW-0436">Ligase</keyword>
<keyword id="KW-0547">Nucleotide-binding</keyword>
<keyword id="KW-0648">Protein biosynthesis</keyword>